<gene>
    <name evidence="1" type="primary">psbE</name>
</gene>
<protein>
    <recommendedName>
        <fullName evidence="1">Cytochrome b559 subunit alpha</fullName>
    </recommendedName>
    <alternativeName>
        <fullName evidence="1">PSII reaction center subunit V</fullName>
    </alternativeName>
</protein>
<accession>Q6YXL9</accession>
<name>PSBE_PHYPA</name>
<proteinExistence type="inferred from homology"/>
<organism>
    <name type="scientific">Physcomitrium patens</name>
    <name type="common">Spreading-leaved earth moss</name>
    <name type="synonym">Physcomitrella patens</name>
    <dbReference type="NCBI Taxonomy" id="3218"/>
    <lineage>
        <taxon>Eukaryota</taxon>
        <taxon>Viridiplantae</taxon>
        <taxon>Streptophyta</taxon>
        <taxon>Embryophyta</taxon>
        <taxon>Bryophyta</taxon>
        <taxon>Bryophytina</taxon>
        <taxon>Bryopsida</taxon>
        <taxon>Funariidae</taxon>
        <taxon>Funariales</taxon>
        <taxon>Funariaceae</taxon>
        <taxon>Physcomitrium</taxon>
    </lineage>
</organism>
<evidence type="ECO:0000255" key="1">
    <source>
        <dbReference type="HAMAP-Rule" id="MF_00642"/>
    </source>
</evidence>
<geneLocation type="chloroplast"/>
<keyword id="KW-0150">Chloroplast</keyword>
<keyword id="KW-0249">Electron transport</keyword>
<keyword id="KW-0349">Heme</keyword>
<keyword id="KW-0408">Iron</keyword>
<keyword id="KW-0472">Membrane</keyword>
<keyword id="KW-0479">Metal-binding</keyword>
<keyword id="KW-0602">Photosynthesis</keyword>
<keyword id="KW-0604">Photosystem II</keyword>
<keyword id="KW-0934">Plastid</keyword>
<keyword id="KW-1185">Reference proteome</keyword>
<keyword id="KW-0793">Thylakoid</keyword>
<keyword id="KW-0812">Transmembrane</keyword>
<keyword id="KW-1133">Transmembrane helix</keyword>
<keyword id="KW-0813">Transport</keyword>
<feature type="chain" id="PRO_0000200330" description="Cytochrome b559 subunit alpha">
    <location>
        <begin position="1"/>
        <end position="83"/>
    </location>
</feature>
<feature type="transmembrane region" description="Helical" evidence="1">
    <location>
        <begin position="21"/>
        <end position="35"/>
    </location>
</feature>
<feature type="binding site" description="axial binding residue" evidence="1">
    <location>
        <position position="23"/>
    </location>
    <ligand>
        <name>heme</name>
        <dbReference type="ChEBI" id="CHEBI:30413"/>
        <note>ligand shared with beta subunit</note>
    </ligand>
    <ligandPart>
        <name>Fe</name>
        <dbReference type="ChEBI" id="CHEBI:18248"/>
    </ligandPart>
</feature>
<comment type="function">
    <text evidence="1">This b-type cytochrome is tightly associated with the reaction center of photosystem II (PSII). PSII is a light-driven water:plastoquinone oxidoreductase that uses light energy to abstract electrons from H(2)O, generating O(2) and a proton gradient subsequently used for ATP formation. It consists of a core antenna complex that captures photons, and an electron transfer chain that converts photonic excitation into a charge separation.</text>
</comment>
<comment type="cofactor">
    <cofactor evidence="1">
        <name>heme b</name>
        <dbReference type="ChEBI" id="CHEBI:60344"/>
    </cofactor>
    <text evidence="1">With its partner (PsbF) binds heme. PSII binds additional chlorophylls, carotenoids and specific lipids.</text>
</comment>
<comment type="subunit">
    <text evidence="1">Heterodimer of an alpha subunit and a beta subunit. PSII is composed of 1 copy each of membrane proteins PsbA, PsbB, PsbC, PsbD, PsbE, PsbF, PsbH, PsbI, PsbJ, PsbK, PsbL, PsbM, PsbT, PsbX, PsbY, PsbZ, Psb30/Ycf12, at least 3 peripheral proteins of the oxygen-evolving complex and a large number of cofactors. It forms dimeric complexes.</text>
</comment>
<comment type="subcellular location">
    <subcellularLocation>
        <location evidence="1">Plastid</location>
        <location evidence="1">Chloroplast thylakoid membrane</location>
        <topology evidence="1">Single-pass membrane protein</topology>
    </subcellularLocation>
</comment>
<comment type="similarity">
    <text evidence="1">Belongs to the PsbE/PsbF family.</text>
</comment>
<reference key="1">
    <citation type="journal article" date="2003" name="Nucleic Acids Res.">
        <title>Complete chloroplast DNA sequence of the moss Physcomitrella patens: evidence for the loss and relocation of rpoA from the chloroplast to the nucleus.</title>
        <authorList>
            <person name="Sugiura C."/>
            <person name="Kobayashi Y."/>
            <person name="Setsuyuki A."/>
            <person name="Sugita C."/>
            <person name="Sugita M."/>
        </authorList>
    </citation>
    <scope>NUCLEOTIDE SEQUENCE [LARGE SCALE GENOMIC DNA]</scope>
    <source>
        <strain>cv. Gransden 2004</strain>
    </source>
</reference>
<sequence length="83" mass="9481">MSGNTGERPFADIITSIRYWVIHSITIPSLFIAGWLFVSTGLAYDVFGSPRPNEYFTESRQEVPLITGRFNSLEQVDEFTRSF</sequence>
<dbReference type="EMBL" id="AP005672">
    <property type="protein sequence ID" value="BAC85033.1"/>
    <property type="molecule type" value="Genomic_DNA"/>
</dbReference>
<dbReference type="RefSeq" id="NP_904183.1">
    <property type="nucleotide sequence ID" value="NC_005087.2"/>
</dbReference>
<dbReference type="RefSeq" id="YP_009477514.1">
    <property type="nucleotide sequence ID" value="NC_037465.1"/>
</dbReference>
<dbReference type="SMR" id="Q6YXL9"/>
<dbReference type="FunCoup" id="Q6YXL9">
    <property type="interactions" value="28"/>
</dbReference>
<dbReference type="STRING" id="3218.Q6YXL9"/>
<dbReference type="GeneID" id="2546812"/>
<dbReference type="GeneID" id="36487128"/>
<dbReference type="KEGG" id="ppp:2546812"/>
<dbReference type="InParanoid" id="Q6YXL9"/>
<dbReference type="OrthoDB" id="1839964at2759"/>
<dbReference type="Proteomes" id="UP000006727">
    <property type="component" value="Chloroplast"/>
</dbReference>
<dbReference type="GO" id="GO:0009535">
    <property type="term" value="C:chloroplast thylakoid membrane"/>
    <property type="evidence" value="ECO:0007669"/>
    <property type="project" value="UniProtKB-SubCell"/>
</dbReference>
<dbReference type="GO" id="GO:0009539">
    <property type="term" value="C:photosystem II reaction center"/>
    <property type="evidence" value="ECO:0007669"/>
    <property type="project" value="InterPro"/>
</dbReference>
<dbReference type="GO" id="GO:0009055">
    <property type="term" value="F:electron transfer activity"/>
    <property type="evidence" value="ECO:0007669"/>
    <property type="project" value="UniProtKB-UniRule"/>
</dbReference>
<dbReference type="GO" id="GO:0020037">
    <property type="term" value="F:heme binding"/>
    <property type="evidence" value="ECO:0007669"/>
    <property type="project" value="InterPro"/>
</dbReference>
<dbReference type="GO" id="GO:0005506">
    <property type="term" value="F:iron ion binding"/>
    <property type="evidence" value="ECO:0007669"/>
    <property type="project" value="UniProtKB-UniRule"/>
</dbReference>
<dbReference type="GO" id="GO:0009767">
    <property type="term" value="P:photosynthetic electron transport chain"/>
    <property type="evidence" value="ECO:0007669"/>
    <property type="project" value="InterPro"/>
</dbReference>
<dbReference type="Gene3D" id="1.20.5.860">
    <property type="entry name" value="Photosystem II cytochrome b559, alpha subunit"/>
    <property type="match status" value="1"/>
</dbReference>
<dbReference type="HAMAP" id="MF_00642">
    <property type="entry name" value="PSII_PsbE"/>
    <property type="match status" value="1"/>
</dbReference>
<dbReference type="InterPro" id="IPR006217">
    <property type="entry name" value="PSII_cyt_b559_asu"/>
</dbReference>
<dbReference type="InterPro" id="IPR037025">
    <property type="entry name" value="PSII_cyt_b559_asu_sf"/>
</dbReference>
<dbReference type="InterPro" id="IPR006216">
    <property type="entry name" value="PSII_cyt_b559_CS"/>
</dbReference>
<dbReference type="InterPro" id="IPR013081">
    <property type="entry name" value="PSII_cyt_b559_N"/>
</dbReference>
<dbReference type="InterPro" id="IPR013082">
    <property type="entry name" value="PSII_cytb559_asu_lum"/>
</dbReference>
<dbReference type="NCBIfam" id="TIGR01332">
    <property type="entry name" value="cyt_b559_alpha"/>
    <property type="match status" value="1"/>
</dbReference>
<dbReference type="PANTHER" id="PTHR33391">
    <property type="entry name" value="CYTOCHROME B559 SUBUNIT BETA-RELATED"/>
    <property type="match status" value="1"/>
</dbReference>
<dbReference type="PANTHER" id="PTHR33391:SF9">
    <property type="entry name" value="CYTOCHROME B559 SUBUNIT BETA-RELATED"/>
    <property type="match status" value="1"/>
</dbReference>
<dbReference type="Pfam" id="PF00283">
    <property type="entry name" value="Cytochrom_B559"/>
    <property type="match status" value="1"/>
</dbReference>
<dbReference type="Pfam" id="PF00284">
    <property type="entry name" value="Cytochrom_B559a"/>
    <property type="match status" value="1"/>
</dbReference>
<dbReference type="PIRSF" id="PIRSF000036">
    <property type="entry name" value="PsbE"/>
    <property type="match status" value="1"/>
</dbReference>
<dbReference type="SUPFAM" id="SSF161045">
    <property type="entry name" value="Cytochrome b559 subunits"/>
    <property type="match status" value="1"/>
</dbReference>
<dbReference type="PROSITE" id="PS00537">
    <property type="entry name" value="CYTOCHROME_B559"/>
    <property type="match status" value="1"/>
</dbReference>